<keyword id="KW-0014">AIDS</keyword>
<keyword id="KW-0167">Capsid protein</keyword>
<keyword id="KW-1032">Host cell membrane</keyword>
<keyword id="KW-1035">Host cytoplasm</keyword>
<keyword id="KW-1039">Host endosome</keyword>
<keyword id="KW-1043">Host membrane</keyword>
<keyword id="KW-1048">Host nucleus</keyword>
<keyword id="KW-0945">Host-virus interaction</keyword>
<keyword id="KW-0449">Lipoprotein</keyword>
<keyword id="KW-0472">Membrane</keyword>
<keyword id="KW-0479">Metal-binding</keyword>
<keyword id="KW-0519">Myristate</keyword>
<keyword id="KW-0597">Phosphoprotein</keyword>
<keyword id="KW-0677">Repeat</keyword>
<keyword id="KW-0688">Ribosomal frameshifting</keyword>
<keyword id="KW-0694">RNA-binding</keyword>
<keyword id="KW-1198">Viral budding</keyword>
<keyword id="KW-1187">Viral budding via the host ESCRT complexes</keyword>
<keyword id="KW-0543">Viral nucleoprotein</keyword>
<keyword id="KW-1188">Viral release from host cell</keyword>
<keyword id="KW-0946">Virion</keyword>
<keyword id="KW-0862">Zinc</keyword>
<keyword id="KW-0863">Zinc-finger</keyword>
<accession>P20874</accession>
<dbReference type="EMBL" id="M31113">
    <property type="protein sequence ID" value="AAB01351.1"/>
    <property type="molecule type" value="Genomic_DNA"/>
</dbReference>
<dbReference type="PIR" id="A33943">
    <property type="entry name" value="FOLJST"/>
</dbReference>
<dbReference type="SMR" id="P20874"/>
<dbReference type="PRO" id="PR:P20874"/>
<dbReference type="Proteomes" id="UP000007713">
    <property type="component" value="Segment"/>
</dbReference>
<dbReference type="GO" id="GO:0042025">
    <property type="term" value="C:host cell nucleus"/>
    <property type="evidence" value="ECO:0007669"/>
    <property type="project" value="UniProtKB-SubCell"/>
</dbReference>
<dbReference type="GO" id="GO:0020002">
    <property type="term" value="C:host cell plasma membrane"/>
    <property type="evidence" value="ECO:0007669"/>
    <property type="project" value="UniProtKB-SubCell"/>
</dbReference>
<dbReference type="GO" id="GO:0072494">
    <property type="term" value="C:host multivesicular body"/>
    <property type="evidence" value="ECO:0007669"/>
    <property type="project" value="UniProtKB-SubCell"/>
</dbReference>
<dbReference type="GO" id="GO:0016020">
    <property type="term" value="C:membrane"/>
    <property type="evidence" value="ECO:0007669"/>
    <property type="project" value="UniProtKB-KW"/>
</dbReference>
<dbReference type="GO" id="GO:0019013">
    <property type="term" value="C:viral nucleocapsid"/>
    <property type="evidence" value="ECO:0007669"/>
    <property type="project" value="UniProtKB-KW"/>
</dbReference>
<dbReference type="GO" id="GO:0055036">
    <property type="term" value="C:virion membrane"/>
    <property type="evidence" value="ECO:0007669"/>
    <property type="project" value="UniProtKB-SubCell"/>
</dbReference>
<dbReference type="GO" id="GO:0003723">
    <property type="term" value="F:RNA binding"/>
    <property type="evidence" value="ECO:0007669"/>
    <property type="project" value="UniProtKB-KW"/>
</dbReference>
<dbReference type="GO" id="GO:0005198">
    <property type="term" value="F:structural molecule activity"/>
    <property type="evidence" value="ECO:0007669"/>
    <property type="project" value="InterPro"/>
</dbReference>
<dbReference type="GO" id="GO:0008270">
    <property type="term" value="F:zinc ion binding"/>
    <property type="evidence" value="ECO:0007669"/>
    <property type="project" value="UniProtKB-KW"/>
</dbReference>
<dbReference type="GO" id="GO:0039702">
    <property type="term" value="P:viral budding via host ESCRT complex"/>
    <property type="evidence" value="ECO:0007669"/>
    <property type="project" value="UniProtKB-KW"/>
</dbReference>
<dbReference type="GO" id="GO:0075523">
    <property type="term" value="P:viral translational frameshifting"/>
    <property type="evidence" value="ECO:0007669"/>
    <property type="project" value="UniProtKB-KW"/>
</dbReference>
<dbReference type="Gene3D" id="1.10.1200.30">
    <property type="match status" value="1"/>
</dbReference>
<dbReference type="Gene3D" id="1.10.375.10">
    <property type="entry name" value="Human Immunodeficiency Virus Type 1 Capsid Protein"/>
    <property type="match status" value="1"/>
</dbReference>
<dbReference type="Gene3D" id="1.10.150.90">
    <property type="entry name" value="Immunodeficiency lentiviruses, gag gene matrix protein p17"/>
    <property type="match status" value="1"/>
</dbReference>
<dbReference type="Gene3D" id="1.20.5.760">
    <property type="entry name" value="Single helix bin"/>
    <property type="match status" value="1"/>
</dbReference>
<dbReference type="Gene3D" id="4.10.60.10">
    <property type="entry name" value="Zinc finger, CCHC-type"/>
    <property type="match status" value="1"/>
</dbReference>
<dbReference type="InterPro" id="IPR045345">
    <property type="entry name" value="Gag_p24_C"/>
</dbReference>
<dbReference type="InterPro" id="IPR000071">
    <property type="entry name" value="Lentvrl_matrix_N"/>
</dbReference>
<dbReference type="InterPro" id="IPR012344">
    <property type="entry name" value="Matrix_HIV/RSV_N"/>
</dbReference>
<dbReference type="InterPro" id="IPR050195">
    <property type="entry name" value="Primate_lentivir_Gag_pol-like"/>
</dbReference>
<dbReference type="InterPro" id="IPR008916">
    <property type="entry name" value="Retrov_capsid_C"/>
</dbReference>
<dbReference type="InterPro" id="IPR008919">
    <property type="entry name" value="Retrov_capsid_N"/>
</dbReference>
<dbReference type="InterPro" id="IPR010999">
    <property type="entry name" value="Retrovr_matrix"/>
</dbReference>
<dbReference type="InterPro" id="IPR001878">
    <property type="entry name" value="Znf_CCHC"/>
</dbReference>
<dbReference type="InterPro" id="IPR036875">
    <property type="entry name" value="Znf_CCHC_sf"/>
</dbReference>
<dbReference type="PANTHER" id="PTHR40389:SF4">
    <property type="match status" value="1"/>
</dbReference>
<dbReference type="PANTHER" id="PTHR40389">
    <property type="entry name" value="ENDOGENOUS RETROVIRUS GROUP K MEMBER 24 GAG POLYPROTEIN-RELATED"/>
    <property type="match status" value="1"/>
</dbReference>
<dbReference type="Pfam" id="PF00540">
    <property type="entry name" value="Gag_p17"/>
    <property type="match status" value="1"/>
</dbReference>
<dbReference type="Pfam" id="PF00607">
    <property type="entry name" value="Gag_p24"/>
    <property type="match status" value="1"/>
</dbReference>
<dbReference type="Pfam" id="PF19317">
    <property type="entry name" value="Gag_p24_C"/>
    <property type="match status" value="1"/>
</dbReference>
<dbReference type="Pfam" id="PF00098">
    <property type="entry name" value="zf-CCHC"/>
    <property type="match status" value="2"/>
</dbReference>
<dbReference type="PRINTS" id="PR00234">
    <property type="entry name" value="HIV1MATRIX"/>
</dbReference>
<dbReference type="SMART" id="SM00343">
    <property type="entry name" value="ZnF_C2HC"/>
    <property type="match status" value="2"/>
</dbReference>
<dbReference type="SUPFAM" id="SSF47836">
    <property type="entry name" value="Retroviral matrix proteins"/>
    <property type="match status" value="1"/>
</dbReference>
<dbReference type="SUPFAM" id="SSF47353">
    <property type="entry name" value="Retrovirus capsid dimerization domain-like"/>
    <property type="match status" value="1"/>
</dbReference>
<dbReference type="SUPFAM" id="SSF47943">
    <property type="entry name" value="Retrovirus capsid protein, N-terminal core domain"/>
    <property type="match status" value="1"/>
</dbReference>
<dbReference type="SUPFAM" id="SSF57756">
    <property type="entry name" value="Retrovirus zinc finger-like domains"/>
    <property type="match status" value="1"/>
</dbReference>
<dbReference type="PROSITE" id="PS50158">
    <property type="entry name" value="ZF_CCHC"/>
    <property type="match status" value="2"/>
</dbReference>
<feature type="initiator methionine" description="Removed; by host" evidence="1">
    <location>
        <position position="1"/>
    </location>
</feature>
<feature type="chain" id="PRO_0000261250" description="Gag polyprotein">
    <location>
        <begin position="2"/>
        <end position="521"/>
    </location>
</feature>
<feature type="chain" id="PRO_0000038617" description="Matrix protein p17" evidence="1">
    <location>
        <begin position="2"/>
        <end position="135"/>
    </location>
</feature>
<feature type="chain" id="PRO_0000038618" description="Capsid protein p24" evidence="1">
    <location>
        <begin position="136"/>
        <end position="365"/>
    </location>
</feature>
<feature type="peptide" id="PRO_0000042095" description="Spacer peptide 1" evidence="1">
    <location>
        <begin position="366"/>
        <end position="382"/>
    </location>
</feature>
<feature type="chain" id="PRO_0000042096" description="Nucleocapsid protein p7" evidence="1">
    <location>
        <begin position="383"/>
        <end position="431"/>
    </location>
</feature>
<feature type="peptide" id="PRO_0000042097" description="Spacer peptide 2" evidence="1">
    <location>
        <begin position="432"/>
        <end position="445"/>
    </location>
</feature>
<feature type="chain" id="PRO_0000042098" description="p6-gag" evidence="1">
    <location>
        <begin position="446"/>
        <end position="521"/>
    </location>
</feature>
<feature type="zinc finger region" description="CCHC-type 1" evidence="9">
    <location>
        <begin position="389"/>
        <end position="406"/>
    </location>
</feature>
<feature type="zinc finger region" description="CCHC-type 2" evidence="9">
    <location>
        <begin position="410"/>
        <end position="427"/>
    </location>
</feature>
<feature type="region of interest" description="Interaction with Gp41" evidence="6">
    <location>
        <begin position="7"/>
        <end position="31"/>
    </location>
</feature>
<feature type="region of interest" description="Interaction with host CALM1" evidence="5">
    <location>
        <begin position="8"/>
        <end position="43"/>
    </location>
</feature>
<feature type="region of interest" description="Interaction with host AP3D1" evidence="7">
    <location>
        <begin position="12"/>
        <end position="19"/>
    </location>
</feature>
<feature type="region of interest" description="Interaction with membrane phosphatidylinositol 4,5-bisphosphate and RNA" evidence="6">
    <location>
        <begin position="14"/>
        <end position="33"/>
    </location>
</feature>
<feature type="region of interest" description="Interaction with membrane phosphatidylinositol 4,5-bisphosphate" evidence="6">
    <location>
        <begin position="73"/>
        <end position="77"/>
    </location>
</feature>
<feature type="region of interest" description="Disordered" evidence="10">
    <location>
        <begin position="112"/>
        <end position="138"/>
    </location>
</feature>
<feature type="region of interest" description="Interaction with host PPIA/CYPA and NUP153" evidence="6">
    <location>
        <begin position="191"/>
        <end position="228"/>
    </location>
</feature>
<feature type="region of interest" description="PPIA/CYPA-binding loop" evidence="5">
    <location>
        <begin position="219"/>
        <end position="226"/>
    </location>
</feature>
<feature type="region of interest" description="Dimerization/Multimerization of capsid protein p24" evidence="5">
    <location>
        <begin position="279"/>
        <end position="365"/>
    </location>
</feature>
<feature type="short sequence motif" description="Nuclear export signal" evidence="1">
    <location>
        <begin position="16"/>
        <end position="22"/>
    </location>
</feature>
<feature type="short sequence motif" description="Nuclear localization signal" evidence="1">
    <location>
        <begin position="26"/>
        <end position="32"/>
    </location>
</feature>
<feature type="short sequence motif" description="PTAP/PSAP motif">
    <location>
        <begin position="456"/>
        <end position="459"/>
    </location>
</feature>
<feature type="site" description="Cleavage; by viral protease" evidence="1">
    <location>
        <begin position="135"/>
        <end position="136"/>
    </location>
</feature>
<feature type="site" description="Cleavage; by viral protease" evidence="1">
    <location>
        <begin position="365"/>
        <end position="366"/>
    </location>
</feature>
<feature type="site" description="Cleavage; by viral protease" evidence="1">
    <location>
        <begin position="382"/>
        <end position="383"/>
    </location>
</feature>
<feature type="site" description="Cleavage; by viral protease" evidence="1">
    <location>
        <begin position="431"/>
        <end position="432"/>
    </location>
</feature>
<feature type="site" description="Cleavage; by viral protease" evidence="1">
    <location>
        <begin position="445"/>
        <end position="446"/>
    </location>
</feature>
<feature type="modified residue" description="Phosphoserine; by host MAPK1" evidence="6">
    <location>
        <position position="150"/>
    </location>
</feature>
<feature type="lipid moiety-binding region" description="N-myristoyl glycine; by host" evidence="1">
    <location>
        <position position="2"/>
    </location>
</feature>
<evidence type="ECO:0000250" key="1"/>
<evidence type="ECO:0000250" key="2">
    <source>
        <dbReference type="UniProtKB" id="P03347"/>
    </source>
</evidence>
<evidence type="ECO:0000250" key="3">
    <source>
        <dbReference type="UniProtKB" id="P03348"/>
    </source>
</evidence>
<evidence type="ECO:0000250" key="4">
    <source>
        <dbReference type="UniProtKB" id="P03349"/>
    </source>
</evidence>
<evidence type="ECO:0000250" key="5">
    <source>
        <dbReference type="UniProtKB" id="P04591"/>
    </source>
</evidence>
<evidence type="ECO:0000250" key="6">
    <source>
        <dbReference type="UniProtKB" id="P12493"/>
    </source>
</evidence>
<evidence type="ECO:0000250" key="7">
    <source>
        <dbReference type="UniProtKB" id="P12497"/>
    </source>
</evidence>
<evidence type="ECO:0000250" key="8">
    <source>
        <dbReference type="UniProtKB" id="P18095"/>
    </source>
</evidence>
<evidence type="ECO:0000255" key="9">
    <source>
        <dbReference type="PROSITE-ProRule" id="PRU00047"/>
    </source>
</evidence>
<evidence type="ECO:0000256" key="10">
    <source>
        <dbReference type="SAM" id="MobiDB-lite"/>
    </source>
</evidence>
<evidence type="ECO:0000305" key="11"/>
<sequence>MGARNSVLRGKKADELEKIRLRPGGKKKYRLKHIVWAANELDRFGLAESLLESKEGCQKILTVLDPLVPTGSENLKSLFNTVCVIWCIHAEEKAKDTEEAKQKVQRHLVAETKTTEKMPSTSRPTAPPSGNGGNFPVQQVAGNYTHVPLSPRTLNAWVKLVEEKKFGAEVVPGFQALSEGCTPYDINQMLNCVGDHQAAMQIIREIINEEAADWDAQHPIPGPLPAGQLREPRGSDIAGTTSTVEEQIQWMFRPQNPVPVGSIYRRWIQIGLQKCVRMYNPTNILDIKQGPKEPFQSYVDRFYKSLRAEQTDPAVKNWMTQTLLVQNANPDCKLVLKGLGINPTLEEMLTACQGVGGPGQKARLMAEALKEAMAPAPIPFAAAQQRRTIKCWNCGKEGHSARQCRAPRRQGCWKCGKAGHIMAKCPERQAGFLGLGPWGKKPRNFPVAQIPQGLTPTAPPIDPVEDLLEKYMQQGKRQREQRERPYKEVTEDFLQLEKQETPCRETTEDLLHLNSLFGKDQ</sequence>
<protein>
    <recommendedName>
        <fullName>Gag polyprotein</fullName>
    </recommendedName>
    <alternativeName>
        <fullName>Pr55Gag</fullName>
    </alternativeName>
    <component>
        <recommendedName>
            <fullName>Matrix protein p17</fullName>
            <shortName>MA</shortName>
        </recommendedName>
    </component>
    <component>
        <recommendedName>
            <fullName>Capsid protein p24</fullName>
            <shortName>CA</shortName>
        </recommendedName>
    </component>
    <component>
        <recommendedName>
            <fullName evidence="6">Spacer peptide 1</fullName>
            <shortName>SP1</shortName>
        </recommendedName>
        <alternativeName>
            <fullName>p2</fullName>
        </alternativeName>
    </component>
    <component>
        <recommendedName>
            <fullName>Nucleocapsid protein p7</fullName>
            <shortName>NC</shortName>
        </recommendedName>
    </component>
    <component>
        <recommendedName>
            <fullName evidence="6">Spacer peptide 2</fullName>
            <shortName>SP2</shortName>
        </recommendedName>
        <alternativeName>
            <fullName>p1</fullName>
        </alternativeName>
    </component>
    <component>
        <recommendedName>
            <fullName>p6-gag</fullName>
        </recommendedName>
    </component>
</protein>
<comment type="function">
    <molecule>Gag polyprotein</molecule>
    <text evidence="5">Mediates, with Gag-Pol polyprotein, the essential events in virion assembly, including binding the plasma membrane, making the protein-protein interactions necessary to create spherical particles, recruiting the viral Env proteins, and packaging the genomic RNA via direct interactions with the RNA packaging sequence (Psi).</text>
</comment>
<comment type="function">
    <molecule>Matrix protein p17</molecule>
    <text evidence="1 6">Targets the polyprotein to the plasma membrane via a multipartite membrane-binding signal, that includes its myristoylated N-terminus (By similarity). Matrix protein is part of the pre-integration complex. Implicated in the release from host cell mediated by Vpu. Binds to RNA (By similarity).</text>
</comment>
<comment type="function">
    <molecule>Capsid protein p24</molecule>
    <text evidence="5 6 8">Forms the conical core that encapsulates the genomic RNA-nucleocapsid complex in the virion (By similarity). Most core are conical, with only 7% tubular (By similarity). The core is constituted by capsid protein hexamer subunits (By similarity). The core is disassembled soon after virion entry (By similarity). Host restriction factors such as TRIM5-alpha or TRIMCyp bind retroviral capsids and cause premature capsid disassembly, leading to blocks in reverse transcription (By similarity). Capsid restriction by TRIM5 is one of the factors which restricts HIV-1 to the human species (By similarity). Host PIN1 apparently facilitates the virion uncoating (By similarity). On the other hand, interactions with PDZD8 or CYPA stabilize the capsid (By similarity). The capsid interacts with high affinity with human NONO, promoting detection of viral DNA by CGAS, leading to CGAS-mediated inmmune activation (By similarity).</text>
</comment>
<comment type="function">
    <molecule>Nucleocapsid protein p7</molecule>
    <text evidence="5">Encapsulates and protects viral dimeric unspliced genomic RNA (gRNA). Binds these RNAs through its zinc fingers. Acts as a nucleic acid chaperone which is involved in rearangement of nucleic acid secondary structure during gRNA retrotranscription. Also facilitates template switch leading to recombination. As part of the polyprotein, participates in gRNA dimerization, packaging, tRNA incorporation and virion assembly.</text>
</comment>
<comment type="function">
    <molecule>p6-gag</molecule>
    <text evidence="6">Plays a role in budding of the assembled particle by interacting with the host class E VPS proteins TSG101 and PDCD6IP/AIP1.</text>
</comment>
<comment type="subunit">
    <molecule>Gag polyprotein</molecule>
    <text evidence="4 5">Homotrimer; further assembles as hexamers of trimers. Oligomerization possibly creates a central hole into which the cytoplasmic tail of the gp41 envelope protein may be inserted. Interacts with host TRIM22; this interaction seems to disrupt proper trafficking of Gag polyprotein and may interfere with budding. Interacts with host PDZD8. When ubiquitinated, interacts (via p6-gag domain) with host PACSIN2; this interaction allows PACSIN2 recruitment to viral assembly sites and its subsequent incorporation into virions (By similarity).</text>
</comment>
<comment type="subunit">
    <molecule>Matrix protein p17</molecule>
    <text evidence="5 6">Homotrimer; further assembles as hexamers of trimers. Interacts with gp41 (via C-terminus). Interacts with host CALM1; this interaction induces a conformational change in the Matrix protein, triggering exposure of the myristate group. Interacts with host AP3D1; this interaction allows the polyprotein trafficking to multivesicular bodies during virus assembly. Part of the pre-integration complex (PIC) which is composed of viral genome, matrix protein, Vpr and integrase.</text>
</comment>
<comment type="subunit">
    <molecule>Capsid protein p24</molecule>
    <text evidence="5 6 8">Homodimer; the homodimer further multimerizes as homohexamers or homopentamers (By similarity). Interacts with host NUP98 (By similarity). Interacts with host PPIA/CYPA; this interaction stabilizes the capsid (By similarity). Interacts with host NUP153 (By similarity). Interacts with host PDZD8; this interaction stabilizes the capsid. Interacts with host TRIM5; this interaction destabilizes the capsid (By similarity). Interacts with host CPSF6 (By similarity). Interacts with host NONO; the interaction is the interaction is strong and promotes CGAS-mediated immunity (By similarity).</text>
</comment>
<comment type="subunit">
    <molecule>Nucleocapsid protein p7</molecule>
    <text evidence="6">Interacts with host NUP98.</text>
</comment>
<comment type="subunit">
    <molecule>p6-gag</molecule>
    <text evidence="3 6">Interacts with Vpr; this interaction allows Vpr incorporation into the virion. Interacts with host TSG101. p6-gag interacts with host PDCD6IP/AIP1.</text>
</comment>
<comment type="subcellular location">
    <molecule>Gag polyprotein</molecule>
    <subcellularLocation>
        <location evidence="6">Host cell membrane</location>
        <topology evidence="6">Lipid-anchor</topology>
    </subcellularLocation>
    <subcellularLocation>
        <location evidence="6">Host endosome</location>
        <location evidence="6">Host multivesicular body</location>
    </subcellularLocation>
    <text evidence="6">These locations are probably linked to virus assembly sites. The main location is the cell membrane, but under some circumstances, late endosomal compartments can serve as productive sites for virion assembly.</text>
</comment>
<comment type="subcellular location">
    <molecule>Matrix protein p17</molecule>
    <subcellularLocation>
        <location evidence="6">Virion membrane</location>
        <topology evidence="6">Lipid-anchor</topology>
    </subcellularLocation>
    <subcellularLocation>
        <location evidence="1">Host nucleus</location>
    </subcellularLocation>
    <subcellularLocation>
        <location evidence="1">Host cytoplasm</location>
    </subcellularLocation>
</comment>
<comment type="subcellular location">
    <molecule>Capsid protein p24</molecule>
    <subcellularLocation>
        <location evidence="6">Virion</location>
    </subcellularLocation>
</comment>
<comment type="subcellular location">
    <molecule>Nucleocapsid protein p7</molecule>
    <subcellularLocation>
        <location evidence="6">Virion</location>
    </subcellularLocation>
</comment>
<comment type="alternative products">
    <event type="ribosomal frameshifting"/>
    <isoform>
        <id>P20874-1</id>
        <name>Gag polyprotein</name>
        <sequence type="displayed"/>
    </isoform>
    <isoform>
        <id>P20876-1</id>
        <name>Gag-Pol polyprotein</name>
        <sequence type="external"/>
    </isoform>
    <text>Translation results in the formation of the Gag polyprotein most of the time. Ribosomal frameshifting at the gag-pol genes boundary occurs at low frequency and produces the Gag-Pol polyprotein. This strategy of translation probably allows the virus to modulate the quantity of each viral protein. Maintenance of a correct Gag to Gag-Pol ratio is essential for RNA dimerization and viral infectivity.</text>
</comment>
<comment type="domain">
    <text evidence="1">Late-budding domains (L domains) are short sequence motifs essential for viral particle budding. They recruit proteins of the host ESCRT machinery (Endosomal Sorting Complex Required for Transport) or ESCRT-associated proteins. p6-gag contains one L domains: a PTAP/PSAP motif, which interacts with the UEV domain of TSG101 (By similarity).</text>
</comment>
<comment type="PTM">
    <text evidence="6">Gag-Pol polyprotein: Specific enzymatic cleavages by the viral protease yield mature proteins.</text>
</comment>
<comment type="PTM">
    <molecule>Matrix protein p17</molecule>
    <text evidence="5">Tyrosine phosphorylated presumably in the virion by a host kinase. Phosphorylation is apparently not a major regulator of membrane association.</text>
</comment>
<comment type="PTM">
    <text evidence="6">Capsid protein p24 is phosphorylated possibly by host MAPK1; this phosphorylation is necessary for Pin1-mediated virion uncoating.</text>
</comment>
<comment type="PTM">
    <text evidence="2">Nucleocapsid protein p7 is methylated by host PRMT6, impairing its function by reducing RNA annealing and the initiation of reverse transcription.</text>
</comment>
<comment type="miscellaneous">
    <molecule>Isoform Gag polyprotein</molecule>
    <text>Produced by conventional translation.</text>
</comment>
<comment type="similarity">
    <text evidence="11">Belongs to the primate lentivirus group gag polyprotein family.</text>
</comment>
<name>GAG_HV2ST</name>
<gene>
    <name type="primary">gag</name>
</gene>
<organismHost>
    <name type="scientific">Homo sapiens</name>
    <name type="common">Human</name>
    <dbReference type="NCBI Taxonomy" id="9606"/>
</organismHost>
<proteinExistence type="inferred from homology"/>
<organism>
    <name type="scientific">Human immunodeficiency virus type 2 subtype A (isolate ST)</name>
    <name type="common">HIV-2</name>
    <dbReference type="NCBI Taxonomy" id="11721"/>
    <lineage>
        <taxon>Viruses</taxon>
        <taxon>Riboviria</taxon>
        <taxon>Pararnavirae</taxon>
        <taxon>Artverviricota</taxon>
        <taxon>Revtraviricetes</taxon>
        <taxon>Ortervirales</taxon>
        <taxon>Retroviridae</taxon>
        <taxon>Orthoretrovirinae</taxon>
        <taxon>Lentivirus</taxon>
        <taxon>Human immunodeficiency virus 2</taxon>
    </lineage>
</organism>
<reference key="1">
    <citation type="journal article" date="1990" name="J. Virol.">
        <title>Molecular characterization of an attenuated human immunodeficiency virus type 2 isolate.</title>
        <authorList>
            <person name="Kumar P."/>
            <person name="Hui H."/>
            <person name="Kappes J.C."/>
            <person name="Haggarty B.S."/>
            <person name="Hoxie J.A."/>
            <person name="Arya S.K."/>
            <person name="Shaw G.M."/>
            <person name="Hahn B.H."/>
        </authorList>
    </citation>
    <scope>NUCLEOTIDE SEQUENCE [GENOMIC DNA]</scope>
</reference>